<organism>
    <name type="scientific">Streptococcus pneumoniae (strain Hungary19A-6)</name>
    <dbReference type="NCBI Taxonomy" id="487214"/>
    <lineage>
        <taxon>Bacteria</taxon>
        <taxon>Bacillati</taxon>
        <taxon>Bacillota</taxon>
        <taxon>Bacilli</taxon>
        <taxon>Lactobacillales</taxon>
        <taxon>Streptococcaceae</taxon>
        <taxon>Streptococcus</taxon>
    </lineage>
</organism>
<proteinExistence type="inferred from homology"/>
<accession>B1I8B0</accession>
<protein>
    <recommendedName>
        <fullName evidence="1">Nucleoside triphosphate/diphosphate phosphatase</fullName>
        <ecNumber evidence="1">3.6.1.15</ecNumber>
        <ecNumber evidence="1">3.6.1.6</ecNumber>
    </recommendedName>
</protein>
<gene>
    <name type="ordered locus">SPH_2045</name>
</gene>
<keyword id="KW-0378">Hydrolase</keyword>
<keyword id="KW-0460">Magnesium</keyword>
<keyword id="KW-0479">Metal-binding</keyword>
<comment type="function">
    <text evidence="1">Has nucleoside phosphatase activity towards nucleoside triphosphates and nucleoside diphosphates.</text>
</comment>
<comment type="catalytic activity">
    <reaction evidence="1">
        <text>a ribonucleoside 5'-triphosphate + H2O = a ribonucleoside 5'-diphosphate + phosphate + H(+)</text>
        <dbReference type="Rhea" id="RHEA:23680"/>
        <dbReference type="ChEBI" id="CHEBI:15377"/>
        <dbReference type="ChEBI" id="CHEBI:15378"/>
        <dbReference type="ChEBI" id="CHEBI:43474"/>
        <dbReference type="ChEBI" id="CHEBI:57930"/>
        <dbReference type="ChEBI" id="CHEBI:61557"/>
        <dbReference type="EC" id="3.6.1.15"/>
    </reaction>
</comment>
<comment type="catalytic activity">
    <reaction evidence="1">
        <text>a ribonucleoside 5'-diphosphate + H2O = a ribonucleoside 5'-phosphate + phosphate + H(+)</text>
        <dbReference type="Rhea" id="RHEA:36799"/>
        <dbReference type="ChEBI" id="CHEBI:15377"/>
        <dbReference type="ChEBI" id="CHEBI:15378"/>
        <dbReference type="ChEBI" id="CHEBI:43474"/>
        <dbReference type="ChEBI" id="CHEBI:57930"/>
        <dbReference type="ChEBI" id="CHEBI:58043"/>
        <dbReference type="EC" id="3.6.1.6"/>
    </reaction>
</comment>
<comment type="cofactor">
    <cofactor evidence="1">
        <name>Mg(2+)</name>
        <dbReference type="ChEBI" id="CHEBI:18420"/>
    </cofactor>
</comment>
<comment type="similarity">
    <text evidence="1">Belongs to the Ntdp family.</text>
</comment>
<sequence length="177" mass="21338">MKLPKEGDFITIQSYKHDGSLHRTWRDTMVLKTTENAIIGVNDHTLVTESDGRRWVTREPAIVYFHKKYWFNIIAMIRDNGTSYYCNMASPYYLDEEALKYIDYDLDVKIFTDGEKRLLDVEEYERHKRKMNYSDDLDYILKEHVKILVDWINNGRGPFSEAYVNIWYKRYVELKNR</sequence>
<name>NTDP_STRPI</name>
<dbReference type="EC" id="3.6.1.15" evidence="1"/>
<dbReference type="EC" id="3.6.1.6" evidence="1"/>
<dbReference type="EMBL" id="CP000936">
    <property type="protein sequence ID" value="ACA36908.1"/>
    <property type="molecule type" value="Genomic_DNA"/>
</dbReference>
<dbReference type="RefSeq" id="WP_000775321.1">
    <property type="nucleotide sequence ID" value="NC_010380.1"/>
</dbReference>
<dbReference type="SMR" id="B1I8B0"/>
<dbReference type="KEGG" id="spv:SPH_2045"/>
<dbReference type="HOGENOM" id="CLU_109787_1_0_9"/>
<dbReference type="Proteomes" id="UP000002163">
    <property type="component" value="Chromosome"/>
</dbReference>
<dbReference type="GO" id="GO:0000287">
    <property type="term" value="F:magnesium ion binding"/>
    <property type="evidence" value="ECO:0007669"/>
    <property type="project" value="UniProtKB-UniRule"/>
</dbReference>
<dbReference type="GO" id="GO:0017110">
    <property type="term" value="F:nucleoside diphosphate phosphatase activity"/>
    <property type="evidence" value="ECO:0007669"/>
    <property type="project" value="UniProtKB-UniRule"/>
</dbReference>
<dbReference type="GO" id="GO:0017111">
    <property type="term" value="F:ribonucleoside triphosphate phosphatase activity"/>
    <property type="evidence" value="ECO:0007669"/>
    <property type="project" value="UniProtKB-UniRule"/>
</dbReference>
<dbReference type="Gene3D" id="2.40.380.10">
    <property type="entry name" value="FomD-like"/>
    <property type="match status" value="1"/>
</dbReference>
<dbReference type="HAMAP" id="MF_01568">
    <property type="entry name" value="Ntdp"/>
    <property type="match status" value="1"/>
</dbReference>
<dbReference type="InterPro" id="IPR007295">
    <property type="entry name" value="DUF402"/>
</dbReference>
<dbReference type="InterPro" id="IPR035930">
    <property type="entry name" value="FomD-like_sf"/>
</dbReference>
<dbReference type="InterPro" id="IPR050212">
    <property type="entry name" value="Ntdp-like"/>
</dbReference>
<dbReference type="InterPro" id="IPR016882">
    <property type="entry name" value="SA1684"/>
</dbReference>
<dbReference type="NCBIfam" id="NF010183">
    <property type="entry name" value="PRK13662.1"/>
    <property type="match status" value="1"/>
</dbReference>
<dbReference type="PANTHER" id="PTHR39159">
    <property type="match status" value="1"/>
</dbReference>
<dbReference type="PANTHER" id="PTHR39159:SF1">
    <property type="entry name" value="UPF0374 PROTEIN YGAC"/>
    <property type="match status" value="1"/>
</dbReference>
<dbReference type="Pfam" id="PF04167">
    <property type="entry name" value="DUF402"/>
    <property type="match status" value="1"/>
</dbReference>
<dbReference type="PIRSF" id="PIRSF028345">
    <property type="entry name" value="UCP028345"/>
    <property type="match status" value="1"/>
</dbReference>
<dbReference type="SUPFAM" id="SSF159234">
    <property type="entry name" value="FomD-like"/>
    <property type="match status" value="1"/>
</dbReference>
<feature type="chain" id="PRO_1000199755" description="Nucleoside triphosphate/diphosphate phosphatase">
    <location>
        <begin position="1"/>
        <end position="177"/>
    </location>
</feature>
<feature type="active site" description="Proton donor" evidence="1">
    <location>
        <position position="23"/>
    </location>
</feature>
<feature type="binding site" evidence="1">
    <location>
        <position position="87"/>
    </location>
    <ligand>
        <name>Mg(2+)</name>
        <dbReference type="ChEBI" id="CHEBI:18420"/>
        <label>1</label>
    </ligand>
</feature>
<feature type="binding site" evidence="1">
    <location>
        <position position="103"/>
    </location>
    <ligand>
        <name>Mg(2+)</name>
        <dbReference type="ChEBI" id="CHEBI:18420"/>
        <label>1</label>
    </ligand>
</feature>
<feature type="binding site" evidence="1">
    <location>
        <position position="105"/>
    </location>
    <ligand>
        <name>Mg(2+)</name>
        <dbReference type="ChEBI" id="CHEBI:18420"/>
        <label>2</label>
    </ligand>
</feature>
<feature type="binding site" evidence="1">
    <location>
        <position position="107"/>
    </location>
    <ligand>
        <name>Mg(2+)</name>
        <dbReference type="ChEBI" id="CHEBI:18420"/>
        <label>1</label>
    </ligand>
</feature>
<feature type="binding site" evidence="1">
    <location>
        <position position="107"/>
    </location>
    <ligand>
        <name>Mg(2+)</name>
        <dbReference type="ChEBI" id="CHEBI:18420"/>
        <label>2</label>
    </ligand>
</feature>
<feature type="binding site" evidence="1">
    <location>
        <position position="120"/>
    </location>
    <ligand>
        <name>Mg(2+)</name>
        <dbReference type="ChEBI" id="CHEBI:18420"/>
        <label>2</label>
    </ligand>
</feature>
<feature type="binding site" evidence="1">
    <location>
        <position position="123"/>
    </location>
    <ligand>
        <name>Mg(2+)</name>
        <dbReference type="ChEBI" id="CHEBI:18420"/>
        <label>2</label>
    </ligand>
</feature>
<reference key="1">
    <citation type="journal article" date="2010" name="Genome Biol.">
        <title>Structure and dynamics of the pan-genome of Streptococcus pneumoniae and closely related species.</title>
        <authorList>
            <person name="Donati C."/>
            <person name="Hiller N.L."/>
            <person name="Tettelin H."/>
            <person name="Muzzi A."/>
            <person name="Croucher N.J."/>
            <person name="Angiuoli S.V."/>
            <person name="Oggioni M."/>
            <person name="Dunning Hotopp J.C."/>
            <person name="Hu F.Z."/>
            <person name="Riley D.R."/>
            <person name="Covacci A."/>
            <person name="Mitchell T.J."/>
            <person name="Bentley S.D."/>
            <person name="Kilian M."/>
            <person name="Ehrlich G.D."/>
            <person name="Rappuoli R."/>
            <person name="Moxon E.R."/>
            <person name="Masignani V."/>
        </authorList>
    </citation>
    <scope>NUCLEOTIDE SEQUENCE [LARGE SCALE GENOMIC DNA]</scope>
    <source>
        <strain>Hungary19A-6</strain>
    </source>
</reference>
<evidence type="ECO:0000255" key="1">
    <source>
        <dbReference type="HAMAP-Rule" id="MF_01568"/>
    </source>
</evidence>